<accession>F4IRM4</accession>
<accession>Q9SIR4</accession>
<protein>
    <recommendedName>
        <fullName evidence="7">Protein PHOX1</fullName>
    </recommendedName>
    <alternativeName>
        <fullName evidence="8">Protein MADB1</fullName>
    </alternativeName>
    <alternativeName>
        <fullName evidence="8">Putative myosin adapter B1</fullName>
    </alternativeName>
</protein>
<sequence>MGKPTGKKKNNNYTEMPPTESSTTGGGKTGKSFDRSATKSFDDDMTIFINRALELKEEGNKLFQKRDYEGAMFRYDKAVKLLPRDHGDVAYLRTSMASCYMQMGLGEYPNAINECNLALEASPRFSKALLKRARCYEALNKLDFAFRDSRVVLNMEPENVSANEIFERVKKVLVGKGIDVDEMEKNLVNVQPVGAARLRKIVKERLRKKKKKSMTMTNGGNDGERKSVEAVVEDAKVDNGEEVDSGRKGKAIEEKKLEDKVAVMDKEVIASEIKEDATVTRTVKLVHGDDIRWAQLPLDSSVVLVRDVIKDRFPALKGFLIKYRDSEGDLVTITTTDELRLAASTREKLGSFRLYIAEVSPNQEPTYDVIDNDESTDKFAKGSSSVADNGSVGDFVESEKASTSLEHWIFQFAQLFKNHVGFDSDSYLELHNLGMKLYTEAMEDIVTGEDAQELFDIAADKFQEMAALAMFNWGNVHMSKARRQIYFPEDGSRETILEKVEAGFEWAKNEYNKAAEKYEGAVKIKSDFYEALLALGQQQFEQAKLCWYHALSGEVDIESDASQDVLKLYNKAEESMEKGMQIWEEMEERRLNGISNFDKHKELLQKLGLDGIFSEASDEESAEQTANMSSQINLLWGSLLYERSIVEYKLGLPTWDECLEVAVEKFELAGASATDIAVMVKNHCSSDNALEGMGFKIDEIVQAWNEMYDAKRWQIGVPSFRLEPLFRRRSPKLHDILENVFSGPQ</sequence>
<keyword id="KW-0968">Cytoplasmic vesicle</keyword>
<keyword id="KW-0472">Membrane</keyword>
<keyword id="KW-1185">Reference proteome</keyword>
<keyword id="KW-0677">Repeat</keyword>
<keyword id="KW-0802">TPR repeat</keyword>
<comment type="function">
    <text evidence="6 10">Carboxylate clamp type tetratricopeptide repeat protein that may act as a potential Hsp90/Hsp70 co-chaperone (PubMed:20856808). Contributes to polar growth of root hairs (PubMed:28096376).</text>
</comment>
<comment type="subunit">
    <text evidence="6">Interacts with myosin XI-1 and XI-K.</text>
</comment>
<comment type="subcellular location">
    <subcellularLocation>
        <location evidence="6">Cytoplasmic vesicle membrane</location>
        <topology evidence="6">Peripheral membrane protein</topology>
    </subcellularLocation>
</comment>
<comment type="disruption phenotype">
    <text evidence="5 6">No clumped-chloroplasts phenotype (PubMed:22025705). 31% reduction in root hair growth (PubMed:28096376). Phox1 and phox4 double mutants show no clumped-chloroplasts phenotype, but a 46% reduction in root hair growth (PubMed:22025705, PubMed:28096376). Phox1, phox3 and phox4 triple mutants and phox1, phox2, phox3 and phox4 quadruple mutants show a 70% reduction in root hair growth (PubMed:28096376).</text>
</comment>
<comment type="sequence caution" evidence="9">
    <conflict type="erroneous gene model prediction">
        <sequence resource="EMBL-CDS" id="AAD23662"/>
    </conflict>
</comment>
<evidence type="ECO:0000255" key="1"/>
<evidence type="ECO:0000255" key="2">
    <source>
        <dbReference type="PROSITE-ProRule" id="PRU00339"/>
    </source>
</evidence>
<evidence type="ECO:0000255" key="3">
    <source>
        <dbReference type="PROSITE-ProRule" id="PRU01081"/>
    </source>
</evidence>
<evidence type="ECO:0000256" key="4">
    <source>
        <dbReference type="SAM" id="MobiDB-lite"/>
    </source>
</evidence>
<evidence type="ECO:0000269" key="5">
    <source>
    </source>
</evidence>
<evidence type="ECO:0000269" key="6">
    <source>
    </source>
</evidence>
<evidence type="ECO:0000303" key="7">
    <source>
    </source>
</evidence>
<evidence type="ECO:0000303" key="8">
    <source>
    </source>
</evidence>
<evidence type="ECO:0000305" key="9"/>
<evidence type="ECO:0000305" key="10">
    <source>
    </source>
</evidence>
<evidence type="ECO:0000312" key="11">
    <source>
        <dbReference type="Araport" id="AT2G25290"/>
    </source>
</evidence>
<evidence type="ECO:0000312" key="12">
    <source>
        <dbReference type="EMBL" id="AEC07680.1"/>
    </source>
</evidence>
<evidence type="ECO:0000312" key="13">
    <source>
        <dbReference type="Proteomes" id="UP000006548"/>
    </source>
</evidence>
<name>PHOX1_ARATH</name>
<feature type="chain" id="PRO_0000440019" description="Protein PHOX1">
    <location>
        <begin position="1"/>
        <end position="745"/>
    </location>
</feature>
<feature type="repeat" description="TPR 1" evidence="2">
    <location>
        <begin position="52"/>
        <end position="85"/>
    </location>
</feature>
<feature type="repeat" description="TPR 2" evidence="1">
    <location>
        <begin position="90"/>
        <end position="125"/>
    </location>
</feature>
<feature type="repeat" description="TPR 3" evidence="2">
    <location>
        <begin position="126"/>
        <end position="159"/>
    </location>
</feature>
<feature type="domain" description="PB1" evidence="3">
    <location>
        <begin position="280"/>
        <end position="359"/>
    </location>
</feature>
<feature type="repeat" description="TPR 4" evidence="1">
    <location>
        <begin position="406"/>
        <end position="441"/>
    </location>
</feature>
<feature type="repeat" description="TPR 5" evidence="1">
    <location>
        <begin position="443"/>
        <end position="472"/>
    </location>
</feature>
<feature type="repeat" description="TPR 6" evidence="1">
    <location>
        <begin position="494"/>
        <end position="528"/>
    </location>
</feature>
<feature type="repeat" description="TPR 7" evidence="1">
    <location>
        <begin position="553"/>
        <end position="586"/>
    </location>
</feature>
<feature type="region of interest" description="Disordered" evidence="4">
    <location>
        <begin position="1"/>
        <end position="37"/>
    </location>
</feature>
<feature type="compositionally biased region" description="Basic residues" evidence="4">
    <location>
        <begin position="1"/>
        <end position="10"/>
    </location>
</feature>
<dbReference type="EMBL" id="AC007070">
    <property type="protein sequence ID" value="AAD23662.1"/>
    <property type="status" value="ALT_SEQ"/>
    <property type="molecule type" value="Genomic_DNA"/>
</dbReference>
<dbReference type="EMBL" id="CP002685">
    <property type="protein sequence ID" value="AEC07680.1"/>
    <property type="molecule type" value="Genomic_DNA"/>
</dbReference>
<dbReference type="EMBL" id="CP002685">
    <property type="protein sequence ID" value="AEC07681.1"/>
    <property type="molecule type" value="Genomic_DNA"/>
</dbReference>
<dbReference type="EMBL" id="CP002685">
    <property type="protein sequence ID" value="AEC07682.1"/>
    <property type="molecule type" value="Genomic_DNA"/>
</dbReference>
<dbReference type="EMBL" id="CP002685">
    <property type="protein sequence ID" value="ANM61435.1"/>
    <property type="molecule type" value="Genomic_DNA"/>
</dbReference>
<dbReference type="PIR" id="F84646">
    <property type="entry name" value="F84646"/>
</dbReference>
<dbReference type="RefSeq" id="NP_001154534.1">
    <property type="nucleotide sequence ID" value="NM_001161062.2"/>
</dbReference>
<dbReference type="RefSeq" id="NP_001189599.1">
    <property type="nucleotide sequence ID" value="NM_001202670.1"/>
</dbReference>
<dbReference type="RefSeq" id="NP_001323652.1">
    <property type="nucleotide sequence ID" value="NM_001335984.1"/>
</dbReference>
<dbReference type="RefSeq" id="NP_180101.4">
    <property type="nucleotide sequence ID" value="NM_128086.6"/>
</dbReference>
<dbReference type="SMR" id="F4IRM4"/>
<dbReference type="FunCoup" id="F4IRM4">
    <property type="interactions" value="509"/>
</dbReference>
<dbReference type="STRING" id="3702.F4IRM4"/>
<dbReference type="iPTMnet" id="F4IRM4"/>
<dbReference type="PaxDb" id="3702-AT2G25290.2"/>
<dbReference type="ProteomicsDB" id="235107"/>
<dbReference type="EnsemblPlants" id="AT2G25290.1">
    <property type="protein sequence ID" value="AT2G25290.1"/>
    <property type="gene ID" value="AT2G25290"/>
</dbReference>
<dbReference type="EnsemblPlants" id="AT2G25290.2">
    <property type="protein sequence ID" value="AT2G25290.2"/>
    <property type="gene ID" value="AT2G25290"/>
</dbReference>
<dbReference type="EnsemblPlants" id="AT2G25290.3">
    <property type="protein sequence ID" value="AT2G25290.3"/>
    <property type="gene ID" value="AT2G25290"/>
</dbReference>
<dbReference type="EnsemblPlants" id="AT2G25290.4">
    <property type="protein sequence ID" value="AT2G25290.4"/>
    <property type="gene ID" value="AT2G25290"/>
</dbReference>
<dbReference type="GeneID" id="817067"/>
<dbReference type="Gramene" id="AT2G25290.1">
    <property type="protein sequence ID" value="AT2G25290.1"/>
    <property type="gene ID" value="AT2G25290"/>
</dbReference>
<dbReference type="Gramene" id="AT2G25290.2">
    <property type="protein sequence ID" value="AT2G25290.2"/>
    <property type="gene ID" value="AT2G25290"/>
</dbReference>
<dbReference type="Gramene" id="AT2G25290.3">
    <property type="protein sequence ID" value="AT2G25290.3"/>
    <property type="gene ID" value="AT2G25290"/>
</dbReference>
<dbReference type="Gramene" id="AT2G25290.4">
    <property type="protein sequence ID" value="AT2G25290.4"/>
    <property type="gene ID" value="AT2G25290"/>
</dbReference>
<dbReference type="KEGG" id="ath:AT2G25290"/>
<dbReference type="Araport" id="AT2G25290"/>
<dbReference type="TAIR" id="AT2G25290">
    <property type="gene designation" value="PHOX1"/>
</dbReference>
<dbReference type="eggNOG" id="KOG4151">
    <property type="taxonomic scope" value="Eukaryota"/>
</dbReference>
<dbReference type="HOGENOM" id="CLU_014258_0_0_1"/>
<dbReference type="InParanoid" id="F4IRM4"/>
<dbReference type="OMA" id="SECNMAL"/>
<dbReference type="OrthoDB" id="2942533at2759"/>
<dbReference type="PRO" id="PR:F4IRM4"/>
<dbReference type="Proteomes" id="UP000006548">
    <property type="component" value="Chromosome 2"/>
</dbReference>
<dbReference type="ExpressionAtlas" id="F4IRM4">
    <property type="expression patterns" value="baseline and differential"/>
</dbReference>
<dbReference type="GO" id="GO:0030659">
    <property type="term" value="C:cytoplasmic vesicle membrane"/>
    <property type="evidence" value="ECO:0007669"/>
    <property type="project" value="UniProtKB-SubCell"/>
</dbReference>
<dbReference type="GO" id="GO:0080115">
    <property type="term" value="F:myosin XI tail binding"/>
    <property type="evidence" value="ECO:0000314"/>
    <property type="project" value="TAIR"/>
</dbReference>
<dbReference type="CDD" id="cd05992">
    <property type="entry name" value="PB1"/>
    <property type="match status" value="1"/>
</dbReference>
<dbReference type="Gene3D" id="3.10.20.90">
    <property type="entry name" value="Phosphatidylinositol 3-kinase Catalytic Subunit, Chain A, domain 1"/>
    <property type="match status" value="1"/>
</dbReference>
<dbReference type="Gene3D" id="1.25.40.10">
    <property type="entry name" value="Tetratricopeptide repeat domain"/>
    <property type="match status" value="2"/>
</dbReference>
<dbReference type="InterPro" id="IPR053793">
    <property type="entry name" value="PB1-like"/>
</dbReference>
<dbReference type="InterPro" id="IPR000270">
    <property type="entry name" value="PB1_dom"/>
</dbReference>
<dbReference type="InterPro" id="IPR044517">
    <property type="entry name" value="PHOX1-4"/>
</dbReference>
<dbReference type="InterPro" id="IPR011990">
    <property type="entry name" value="TPR-like_helical_dom_sf"/>
</dbReference>
<dbReference type="InterPro" id="IPR019734">
    <property type="entry name" value="TPR_rpt"/>
</dbReference>
<dbReference type="PANTHER" id="PTHR46183">
    <property type="entry name" value="PROTEIN CLMP1"/>
    <property type="match status" value="1"/>
</dbReference>
<dbReference type="PANTHER" id="PTHR46183:SF18">
    <property type="entry name" value="PROTEIN PHOX1"/>
    <property type="match status" value="1"/>
</dbReference>
<dbReference type="Pfam" id="PF00564">
    <property type="entry name" value="PB1"/>
    <property type="match status" value="1"/>
</dbReference>
<dbReference type="SMART" id="SM00666">
    <property type="entry name" value="PB1"/>
    <property type="match status" value="1"/>
</dbReference>
<dbReference type="SMART" id="SM00028">
    <property type="entry name" value="TPR"/>
    <property type="match status" value="3"/>
</dbReference>
<dbReference type="SUPFAM" id="SSF54277">
    <property type="entry name" value="CAD &amp; PB1 domains"/>
    <property type="match status" value="1"/>
</dbReference>
<dbReference type="SUPFAM" id="SSF48452">
    <property type="entry name" value="TPR-like"/>
    <property type="match status" value="2"/>
</dbReference>
<dbReference type="PROSITE" id="PS51745">
    <property type="entry name" value="PB1"/>
    <property type="match status" value="1"/>
</dbReference>
<dbReference type="PROSITE" id="PS50005">
    <property type="entry name" value="TPR"/>
    <property type="match status" value="2"/>
</dbReference>
<dbReference type="PROSITE" id="PS50293">
    <property type="entry name" value="TPR_REGION"/>
    <property type="match status" value="1"/>
</dbReference>
<gene>
    <name evidence="7" type="primary">PHOX1</name>
    <name evidence="8" type="synonym">MADB1</name>
    <name evidence="11" type="ordered locus">At2g25290</name>
    <name evidence="12" type="ORF">T22F11.12</name>
</gene>
<reference key="1">
    <citation type="journal article" date="1999" name="Nature">
        <title>Sequence and analysis of chromosome 2 of the plant Arabidopsis thaliana.</title>
        <authorList>
            <person name="Lin X."/>
            <person name="Kaul S."/>
            <person name="Rounsley S.D."/>
            <person name="Shea T.P."/>
            <person name="Benito M.-I."/>
            <person name="Town C.D."/>
            <person name="Fujii C.Y."/>
            <person name="Mason T.M."/>
            <person name="Bowman C.L."/>
            <person name="Barnstead M.E."/>
            <person name="Feldblyum T.V."/>
            <person name="Buell C.R."/>
            <person name="Ketchum K.A."/>
            <person name="Lee J.J."/>
            <person name="Ronning C.M."/>
            <person name="Koo H.L."/>
            <person name="Moffat K.S."/>
            <person name="Cronin L.A."/>
            <person name="Shen M."/>
            <person name="Pai G."/>
            <person name="Van Aken S."/>
            <person name="Umayam L."/>
            <person name="Tallon L.J."/>
            <person name="Gill J.E."/>
            <person name="Adams M.D."/>
            <person name="Carrera A.J."/>
            <person name="Creasy T.H."/>
            <person name="Goodman H.M."/>
            <person name="Somerville C.R."/>
            <person name="Copenhaver G.P."/>
            <person name="Preuss D."/>
            <person name="Nierman W.C."/>
            <person name="White O."/>
            <person name="Eisen J.A."/>
            <person name="Salzberg S.L."/>
            <person name="Fraser C.M."/>
            <person name="Venter J.C."/>
        </authorList>
    </citation>
    <scope>NUCLEOTIDE SEQUENCE [LARGE SCALE GENOMIC DNA]</scope>
    <source>
        <strain>cv. Columbia</strain>
    </source>
</reference>
<reference key="2">
    <citation type="journal article" date="2017" name="Plant J.">
        <title>Araport11: a complete reannotation of the Arabidopsis thaliana reference genome.</title>
        <authorList>
            <person name="Cheng C.Y."/>
            <person name="Krishnakumar V."/>
            <person name="Chan A.P."/>
            <person name="Thibaud-Nissen F."/>
            <person name="Schobel S."/>
            <person name="Town C.D."/>
        </authorList>
    </citation>
    <scope>GENOME REANNOTATION</scope>
    <source>
        <strain>cv. Columbia</strain>
    </source>
</reference>
<reference key="3">
    <citation type="journal article" date="2010" name="PLoS ONE">
        <title>In silico identification of carboxylate clamp type tetratricopeptide repeat proteins in Arabidopsis and rice as putative co-chaperones of Hsp90/Hsp70.</title>
        <authorList>
            <person name="Prasad B.D."/>
            <person name="Goel S."/>
            <person name="Krishna P."/>
        </authorList>
    </citation>
    <scope>GENE FAMILY</scope>
    <scope>NOMENCLATURE</scope>
    <scope>FUNCTION</scope>
</reference>
<reference key="4">
    <citation type="journal article" date="2011" name="Proc. Natl. Acad. Sci. U.S.A.">
        <title>CLUMPED CHLOROPLASTS 1 is required for plastid separation in Arabidopsis.</title>
        <authorList>
            <person name="Yang Y."/>
            <person name="Sage T.L."/>
            <person name="Liu Y."/>
            <person name="Ahmad T.R."/>
            <person name="Marshall W.F."/>
            <person name="Shiu S.H."/>
            <person name="Froehlich J.E."/>
            <person name="Imre K.M."/>
            <person name="Osteryoung K.W."/>
        </authorList>
    </citation>
    <scope>DISRUPTION PHENOTYPE</scope>
</reference>
<reference key="5">
    <citation type="journal article" date="2017" name="Proc. Natl. Acad. Sci. U.S.A.">
        <title>Myosin-driven transport network in plants.</title>
        <authorList>
            <person name="Kurth E.G."/>
            <person name="Peremyslov V.V."/>
            <person name="Turner H.L."/>
            <person name="Makarova K.S."/>
            <person name="Iranzo J."/>
            <person name="Mekhedov S.L."/>
            <person name="Koonin E.V."/>
            <person name="Dolja V.V."/>
        </authorList>
    </citation>
    <scope>FUNCTION</scope>
    <scope>SUBCELLULAR LOCATION</scope>
    <scope>INTERACTION WITH XI-1 AND XI-K</scope>
    <scope>DISRUPTION PHENOTYPE</scope>
</reference>
<proteinExistence type="evidence at protein level"/>
<organism evidence="13">
    <name type="scientific">Arabidopsis thaliana</name>
    <name type="common">Mouse-ear cress</name>
    <dbReference type="NCBI Taxonomy" id="3702"/>
    <lineage>
        <taxon>Eukaryota</taxon>
        <taxon>Viridiplantae</taxon>
        <taxon>Streptophyta</taxon>
        <taxon>Embryophyta</taxon>
        <taxon>Tracheophyta</taxon>
        <taxon>Spermatophyta</taxon>
        <taxon>Magnoliopsida</taxon>
        <taxon>eudicotyledons</taxon>
        <taxon>Gunneridae</taxon>
        <taxon>Pentapetalae</taxon>
        <taxon>rosids</taxon>
        <taxon>malvids</taxon>
        <taxon>Brassicales</taxon>
        <taxon>Brassicaceae</taxon>
        <taxon>Camelineae</taxon>
        <taxon>Arabidopsis</taxon>
    </lineage>
</organism>